<dbReference type="EC" id="4.1.1.15" evidence="2"/>
<dbReference type="EMBL" id="CR860032">
    <property type="protein sequence ID" value="CAH92183.1"/>
    <property type="molecule type" value="mRNA"/>
</dbReference>
<dbReference type="EMBL" id="NDHI03003413">
    <property type="protein sequence ID" value="PNJ59851.1"/>
    <property type="molecule type" value="Genomic_DNA"/>
</dbReference>
<dbReference type="RefSeq" id="NP_001126278.1">
    <property type="nucleotide sequence ID" value="NM_001132806.1"/>
</dbReference>
<dbReference type="RefSeq" id="XP_063568558.1">
    <property type="nucleotide sequence ID" value="XM_063712488.1"/>
</dbReference>
<dbReference type="SMR" id="Q5R7S7"/>
<dbReference type="FunCoup" id="Q5R7S7">
    <property type="interactions" value="646"/>
</dbReference>
<dbReference type="STRING" id="9601.ENSPPYP00000014955"/>
<dbReference type="Ensembl" id="ENSPPYT00000048712.1">
    <property type="protein sequence ID" value="ENSPPYP00000040864.1"/>
    <property type="gene ID" value="ENSPPYG00000013372.3"/>
</dbReference>
<dbReference type="GeneID" id="100173252"/>
<dbReference type="KEGG" id="pon:100173252"/>
<dbReference type="CTD" id="2571"/>
<dbReference type="eggNOG" id="KOG0629">
    <property type="taxonomic scope" value="Eukaryota"/>
</dbReference>
<dbReference type="GeneTree" id="ENSGT00940000155526"/>
<dbReference type="InParanoid" id="Q5R7S7"/>
<dbReference type="OMA" id="RHATYHA"/>
<dbReference type="OrthoDB" id="392571at2759"/>
<dbReference type="Proteomes" id="UP000001595">
    <property type="component" value="Chromosome 2B"/>
</dbReference>
<dbReference type="GO" id="GO:0043679">
    <property type="term" value="C:axon terminus"/>
    <property type="evidence" value="ECO:0007669"/>
    <property type="project" value="Ensembl"/>
</dbReference>
<dbReference type="GO" id="GO:0005938">
    <property type="term" value="C:cell cortex"/>
    <property type="evidence" value="ECO:0007669"/>
    <property type="project" value="Ensembl"/>
</dbReference>
<dbReference type="GO" id="GO:0098982">
    <property type="term" value="C:GABA-ergic synapse"/>
    <property type="evidence" value="ECO:0007669"/>
    <property type="project" value="Ensembl"/>
</dbReference>
<dbReference type="GO" id="GO:0060077">
    <property type="term" value="C:inhibitory synapse"/>
    <property type="evidence" value="ECO:0007669"/>
    <property type="project" value="Ensembl"/>
</dbReference>
<dbReference type="GO" id="GO:0048471">
    <property type="term" value="C:perinuclear region of cytoplasm"/>
    <property type="evidence" value="ECO:0007669"/>
    <property type="project" value="Ensembl"/>
</dbReference>
<dbReference type="GO" id="GO:0048786">
    <property type="term" value="C:presynaptic active zone"/>
    <property type="evidence" value="ECO:0007669"/>
    <property type="project" value="Ensembl"/>
</dbReference>
<dbReference type="GO" id="GO:0004351">
    <property type="term" value="F:glutamate decarboxylase activity"/>
    <property type="evidence" value="ECO:0000250"/>
    <property type="project" value="UniProtKB"/>
</dbReference>
<dbReference type="GO" id="GO:0042802">
    <property type="term" value="F:identical protein binding"/>
    <property type="evidence" value="ECO:0000250"/>
    <property type="project" value="UniProtKB"/>
</dbReference>
<dbReference type="GO" id="GO:0030170">
    <property type="term" value="F:pyridoxal phosphate binding"/>
    <property type="evidence" value="ECO:0007669"/>
    <property type="project" value="InterPro"/>
</dbReference>
<dbReference type="GO" id="GO:0009449">
    <property type="term" value="P:gamma-aminobutyric acid biosynthetic process"/>
    <property type="evidence" value="ECO:0000250"/>
    <property type="project" value="UniProtKB"/>
</dbReference>
<dbReference type="GO" id="GO:0006538">
    <property type="term" value="P:glutamate catabolic process"/>
    <property type="evidence" value="ECO:0000250"/>
    <property type="project" value="UniProtKB"/>
</dbReference>
<dbReference type="GO" id="GO:0035641">
    <property type="term" value="P:locomotory exploration behavior"/>
    <property type="evidence" value="ECO:0007669"/>
    <property type="project" value="Ensembl"/>
</dbReference>
<dbReference type="GO" id="GO:0035176">
    <property type="term" value="P:social behavior"/>
    <property type="evidence" value="ECO:0007669"/>
    <property type="project" value="Ensembl"/>
</dbReference>
<dbReference type="CDD" id="cd06450">
    <property type="entry name" value="DOPA_deC_like"/>
    <property type="match status" value="1"/>
</dbReference>
<dbReference type="FunFam" id="3.90.1150.170:FF:000003">
    <property type="entry name" value="Glutamate decarboxylase 1"/>
    <property type="match status" value="1"/>
</dbReference>
<dbReference type="FunFam" id="3.40.640.10:FF:000016">
    <property type="entry name" value="Glutamate decarboxylase like 1"/>
    <property type="match status" value="1"/>
</dbReference>
<dbReference type="Gene3D" id="3.90.1150.170">
    <property type="match status" value="1"/>
</dbReference>
<dbReference type="Gene3D" id="3.40.640.10">
    <property type="entry name" value="Type I PLP-dependent aspartate aminotransferase-like (Major domain)"/>
    <property type="match status" value="1"/>
</dbReference>
<dbReference type="InterPro" id="IPR002129">
    <property type="entry name" value="PyrdxlP-dep_de-COase"/>
</dbReference>
<dbReference type="InterPro" id="IPR015424">
    <property type="entry name" value="PyrdxlP-dep_Trfase"/>
</dbReference>
<dbReference type="InterPro" id="IPR015421">
    <property type="entry name" value="PyrdxlP-dep_Trfase_major"/>
</dbReference>
<dbReference type="InterPro" id="IPR021115">
    <property type="entry name" value="Pyridoxal-P_BS"/>
</dbReference>
<dbReference type="PANTHER" id="PTHR45677:SF5">
    <property type="entry name" value="GLUTAMATE DECARBOXYLASE 1"/>
    <property type="match status" value="1"/>
</dbReference>
<dbReference type="PANTHER" id="PTHR45677">
    <property type="entry name" value="GLUTAMATE DECARBOXYLASE-RELATED"/>
    <property type="match status" value="1"/>
</dbReference>
<dbReference type="Pfam" id="PF00282">
    <property type="entry name" value="Pyridoxal_deC"/>
    <property type="match status" value="1"/>
</dbReference>
<dbReference type="SUPFAM" id="SSF53383">
    <property type="entry name" value="PLP-dependent transferases"/>
    <property type="match status" value="1"/>
</dbReference>
<dbReference type="PROSITE" id="PS00392">
    <property type="entry name" value="DDC_GAD_HDC_YDC"/>
    <property type="match status" value="1"/>
</dbReference>
<gene>
    <name type="primary">GAD1</name>
</gene>
<accession>Q5R7S7</accession>
<accession>A0A2J8VQQ3</accession>
<keyword id="KW-0210">Decarboxylase</keyword>
<keyword id="KW-0456">Lyase</keyword>
<keyword id="KW-0530">Neurotransmitter biosynthesis</keyword>
<keyword id="KW-0597">Phosphoprotein</keyword>
<keyword id="KW-0663">Pyridoxal phosphate</keyword>
<keyword id="KW-1185">Reference proteome</keyword>
<feature type="chain" id="PRO_0000231041" description="Glutamate decarboxylase 1">
    <location>
        <begin position="1"/>
        <end position="594"/>
    </location>
</feature>
<feature type="region of interest" description="Disordered" evidence="3">
    <location>
        <begin position="1"/>
        <end position="23"/>
    </location>
</feature>
<feature type="compositionally biased region" description="Low complexity" evidence="3">
    <location>
        <begin position="1"/>
        <end position="13"/>
    </location>
</feature>
<feature type="binding site" evidence="2">
    <location>
        <begin position="190"/>
        <end position="192"/>
    </location>
    <ligand>
        <name>4-aminobutanoate</name>
        <dbReference type="ChEBI" id="CHEBI:59888"/>
    </ligand>
</feature>
<feature type="binding site" evidence="2">
    <location>
        <position position="567"/>
    </location>
    <ligand>
        <name>4-aminobutanoate</name>
        <dbReference type="ChEBI" id="CHEBI:59888"/>
    </ligand>
</feature>
<feature type="modified residue" description="Phosphoserine" evidence="1">
    <location>
        <position position="78"/>
    </location>
</feature>
<feature type="modified residue" description="N6-(pyridoxal phosphate)lysine" evidence="2">
    <location>
        <position position="405"/>
    </location>
</feature>
<feature type="sequence conflict" description="In Ref. 1; CAH92183." ref="1">
    <original>N</original>
    <variation>D</variation>
    <location>
        <position position="75"/>
    </location>
</feature>
<feature type="sequence conflict" description="In Ref. 1; CAH92183." ref="1">
    <original>M</original>
    <variation>T</variation>
    <location>
        <position position="261"/>
    </location>
</feature>
<feature type="sequence conflict" description="In Ref. 1; CAH92183." ref="1">
    <original>P</original>
    <variation>L</variation>
    <location>
        <position position="269"/>
    </location>
</feature>
<organism>
    <name type="scientific">Pongo abelii</name>
    <name type="common">Sumatran orangutan</name>
    <name type="synonym">Pongo pygmaeus abelii</name>
    <dbReference type="NCBI Taxonomy" id="9601"/>
    <lineage>
        <taxon>Eukaryota</taxon>
        <taxon>Metazoa</taxon>
        <taxon>Chordata</taxon>
        <taxon>Craniata</taxon>
        <taxon>Vertebrata</taxon>
        <taxon>Euteleostomi</taxon>
        <taxon>Mammalia</taxon>
        <taxon>Eutheria</taxon>
        <taxon>Euarchontoglires</taxon>
        <taxon>Primates</taxon>
        <taxon>Haplorrhini</taxon>
        <taxon>Catarrhini</taxon>
        <taxon>Hominidae</taxon>
        <taxon>Pongo</taxon>
    </lineage>
</organism>
<evidence type="ECO:0000250" key="1">
    <source>
        <dbReference type="UniProtKB" id="P48318"/>
    </source>
</evidence>
<evidence type="ECO:0000250" key="2">
    <source>
        <dbReference type="UniProtKB" id="Q99259"/>
    </source>
</evidence>
<evidence type="ECO:0000256" key="3">
    <source>
        <dbReference type="SAM" id="MobiDB-lite"/>
    </source>
</evidence>
<evidence type="ECO:0000305" key="4"/>
<name>DCE1_PONAB</name>
<proteinExistence type="evidence at transcript level"/>
<comment type="function">
    <text evidence="2">Catalyzes the synthesis of the inhibitory neurotransmitter gamma-aminobutyric acid (GABA) with pyridoxal 5'-phosphate as cofactor.</text>
</comment>
<comment type="catalytic activity">
    <reaction evidence="2">
        <text>L-glutamate + H(+) = 4-aminobutanoate + CO2</text>
        <dbReference type="Rhea" id="RHEA:17785"/>
        <dbReference type="ChEBI" id="CHEBI:15378"/>
        <dbReference type="ChEBI" id="CHEBI:16526"/>
        <dbReference type="ChEBI" id="CHEBI:29985"/>
        <dbReference type="ChEBI" id="CHEBI:59888"/>
        <dbReference type="EC" id="4.1.1.15"/>
    </reaction>
    <physiologicalReaction direction="left-to-right" evidence="2">
        <dbReference type="Rhea" id="RHEA:17786"/>
    </physiologicalReaction>
</comment>
<comment type="cofactor">
    <cofactor evidence="2">
        <name>pyridoxal 5'-phosphate</name>
        <dbReference type="ChEBI" id="CHEBI:597326"/>
    </cofactor>
</comment>
<comment type="subunit">
    <text evidence="2">Homodimer.</text>
</comment>
<comment type="similarity">
    <text evidence="4">Belongs to the group II decarboxylase family.</text>
</comment>
<reference key="1">
    <citation type="submission" date="2004-11" db="EMBL/GenBank/DDBJ databases">
        <authorList>
            <consortium name="The German cDNA consortium"/>
        </authorList>
    </citation>
    <scope>NUCLEOTIDE SEQUENCE [LARGE SCALE MRNA]</scope>
    <source>
        <tissue>Brain cortex</tissue>
    </source>
</reference>
<reference key="2">
    <citation type="submission" date="2017-12" db="EMBL/GenBank/DDBJ databases">
        <title>High-resolution comparative analysis of great ape genomes.</title>
        <authorList>
            <person name="Pollen A."/>
            <person name="Hastie A."/>
            <person name="Hormozdiari F."/>
            <person name="Dougherty M."/>
            <person name="Liu R."/>
            <person name="Chaisson M."/>
            <person name="Hoppe E."/>
            <person name="Hill C."/>
            <person name="Pang A."/>
            <person name="Hillier L."/>
            <person name="Baker C."/>
            <person name="Armstrong J."/>
            <person name="Shendure J."/>
            <person name="Paten B."/>
            <person name="Wilson R."/>
            <person name="Chao H."/>
            <person name="Schneider V."/>
            <person name="Ventura M."/>
            <person name="Kronenberg Z."/>
            <person name="Murali S."/>
            <person name="Gordon D."/>
            <person name="Cantsilieris S."/>
            <person name="Munson K."/>
            <person name="Nelson B."/>
            <person name="Raja A."/>
            <person name="Underwood J."/>
            <person name="Diekhans M."/>
            <person name="Fiddes I."/>
            <person name="Haussler D."/>
            <person name="Eichler E."/>
        </authorList>
    </citation>
    <scope>NUCLEOTIDE SEQUENCE [LARGE SCALE GENOMIC DNA]</scope>
</reference>
<protein>
    <recommendedName>
        <fullName>Glutamate decarboxylase 1</fullName>
        <ecNumber evidence="2">4.1.1.15</ecNumber>
    </recommendedName>
</protein>
<sequence length="594" mass="66906">MASSTPSSSATSSNAGADPNTTNLRPTTYDTWCGVAHGCTRKLGLKICGFLQRTNSLEEKSRLVSAFKERQSSKNLLSCENSDRDARFRRTETDFSNLFARDLLPAKNGEEQTVQFLLEVVDILLNYVRKTFDRSTKVLDFHHPHQLLEGMEGFNLELSDHPESLEQILVDCRDTLKYGVRTGHPRFFNQLSTGLDIIGLAGEWLTSTANTNMFTYEIAPVFVLMEQITLKKMREIVGWSSKDGDGIFSPGGAISNMYSIMAARYKYFPEVKTKGMAAVPKLVLFTSEHSHYSIKKAGAALGFGTDNVILIKCNERGKIIPADFEAKILEAKQKGYVPFYVNATAGTTVYGAFDPIQEIADICEKYNLWLHVDAAWGGGLLMSRKHRHKLNGIERANSVTWNPHKMMGVLLQCSAILVKEKGILQGCNQMCAGYLFQPDKQYDVSYDTGDKAIQCGRHVDIFKFWLMWKAKGTVGFENQINKCLELAEYLYAKIKNREEFEMVFNGEPEHTNVCFWYIPQSLRGVPDSPQRREKLHKVAPKIKALMMESGTTMVGYQPQGDKANFFRMVISNPAATQSDIDFLIEEIERLGQDL</sequence>